<accession>P80256</accession>
<feature type="chain" id="PRO_0000126285" description="Large ribosomal subunit protein bL36">
    <location>
        <begin position="1"/>
        <end position="37"/>
    </location>
</feature>
<feature type="binding site" evidence="1">
    <location>
        <position position="11"/>
    </location>
    <ligand>
        <name>Zn(2+)</name>
        <dbReference type="ChEBI" id="CHEBI:29105"/>
    </ligand>
</feature>
<feature type="binding site" evidence="1">
    <location>
        <position position="14"/>
    </location>
    <ligand>
        <name>Zn(2+)</name>
        <dbReference type="ChEBI" id="CHEBI:29105"/>
    </ligand>
</feature>
<feature type="binding site" evidence="1">
    <location>
        <position position="27"/>
    </location>
    <ligand>
        <name>Zn(2+)</name>
        <dbReference type="ChEBI" id="CHEBI:29105"/>
    </ligand>
</feature>
<feature type="binding site" evidence="1">
    <location>
        <position position="32"/>
    </location>
    <ligand>
        <name>Zn(2+)</name>
        <dbReference type="ChEBI" id="CHEBI:29105"/>
    </ligand>
</feature>
<feature type="strand" evidence="4">
    <location>
        <begin position="11"/>
        <end position="13"/>
    </location>
</feature>
<feature type="strand" evidence="3">
    <location>
        <begin position="15"/>
        <end position="18"/>
    </location>
</feature>
<feature type="strand" evidence="3">
    <location>
        <begin position="23"/>
        <end position="26"/>
    </location>
</feature>
<feature type="helix" evidence="3">
    <location>
        <begin position="30"/>
        <end position="32"/>
    </location>
</feature>
<feature type="strand" evidence="3">
    <location>
        <begin position="34"/>
        <end position="36"/>
    </location>
</feature>
<gene>
    <name type="primary">rpmJ</name>
    <name type="synonym">rpl36</name>
</gene>
<sequence length="37" mass="4421">MKVRASVKRICDKCKVIRRHGRVYVICENPKHKQRQG</sequence>
<name>RL36_THETH</name>
<organism>
    <name type="scientific">Thermus thermophilus</name>
    <dbReference type="NCBI Taxonomy" id="274"/>
    <lineage>
        <taxon>Bacteria</taxon>
        <taxon>Thermotogati</taxon>
        <taxon>Deinococcota</taxon>
        <taxon>Deinococci</taxon>
        <taxon>Thermales</taxon>
        <taxon>Thermaceae</taxon>
        <taxon>Thermus</taxon>
    </lineage>
</organism>
<proteinExistence type="evidence at protein level"/>
<comment type="cofactor">
    <cofactor evidence="1">
        <name>Zn(2+)</name>
        <dbReference type="ChEBI" id="CHEBI:29105"/>
    </cofactor>
    <text evidence="1">Binds 1 zinc ion per subunit.</text>
</comment>
<comment type="subunit">
    <text>Part of the 50S ribosomal subunit.</text>
</comment>
<comment type="similarity">
    <text evidence="2">Belongs to the bacterial ribosomal protein bL36 family.</text>
</comment>
<comment type="caution">
    <text evidence="2">The sequence shown here has been extracted from PDB entry 1DFE.</text>
</comment>
<dbReference type="RefSeq" id="WP_008633370.1">
    <property type="nucleotide sequence ID" value="NZ_LR027517.1"/>
</dbReference>
<dbReference type="PDB" id="1DFE">
    <property type="method" value="NMR"/>
    <property type="chains" value="A=1-37"/>
</dbReference>
<dbReference type="PDB" id="1DGZ">
    <property type="method" value="NMR"/>
    <property type="chains" value="A=1-37"/>
</dbReference>
<dbReference type="PDB" id="4L47">
    <property type="method" value="X-ray"/>
    <property type="resolution" value="3.22 A"/>
    <property type="chains" value="R9/Y9=1-37"/>
</dbReference>
<dbReference type="PDB" id="4L71">
    <property type="method" value="X-ray"/>
    <property type="resolution" value="3.90 A"/>
    <property type="chains" value="R9/Y9=1-37"/>
</dbReference>
<dbReference type="PDB" id="4LEL">
    <property type="method" value="X-ray"/>
    <property type="resolution" value="3.90 A"/>
    <property type="chains" value="R9/Y9=1-37"/>
</dbReference>
<dbReference type="PDB" id="4LFZ">
    <property type="method" value="X-ray"/>
    <property type="resolution" value="3.92 A"/>
    <property type="chains" value="R9/Y9=1-37"/>
</dbReference>
<dbReference type="PDB" id="4LNT">
    <property type="method" value="X-ray"/>
    <property type="resolution" value="2.94 A"/>
    <property type="chains" value="R9/Y9=1-37"/>
</dbReference>
<dbReference type="PDB" id="4LSK">
    <property type="method" value="X-ray"/>
    <property type="resolution" value="3.48 A"/>
    <property type="chains" value="R9/Y9=1-37"/>
</dbReference>
<dbReference type="PDB" id="4LT8">
    <property type="method" value="X-ray"/>
    <property type="resolution" value="3.14 A"/>
    <property type="chains" value="R9/Y9=1-37"/>
</dbReference>
<dbReference type="PDBsum" id="1DFE"/>
<dbReference type="PDBsum" id="1DGZ"/>
<dbReference type="PDBsum" id="4L47"/>
<dbReference type="PDBsum" id="4L71"/>
<dbReference type="PDBsum" id="4LEL"/>
<dbReference type="PDBsum" id="4LFZ"/>
<dbReference type="PDBsum" id="4LNT"/>
<dbReference type="PDBsum" id="4LSK"/>
<dbReference type="PDBsum" id="4LT8"/>
<dbReference type="SMR" id="P80256"/>
<dbReference type="GeneID" id="3167970"/>
<dbReference type="EvolutionaryTrace" id="P80256"/>
<dbReference type="GO" id="GO:0005737">
    <property type="term" value="C:cytoplasm"/>
    <property type="evidence" value="ECO:0007669"/>
    <property type="project" value="UniProtKB-ARBA"/>
</dbReference>
<dbReference type="GO" id="GO:1990904">
    <property type="term" value="C:ribonucleoprotein complex"/>
    <property type="evidence" value="ECO:0007669"/>
    <property type="project" value="UniProtKB-KW"/>
</dbReference>
<dbReference type="GO" id="GO:0005840">
    <property type="term" value="C:ribosome"/>
    <property type="evidence" value="ECO:0007669"/>
    <property type="project" value="UniProtKB-KW"/>
</dbReference>
<dbReference type="GO" id="GO:0046872">
    <property type="term" value="F:metal ion binding"/>
    <property type="evidence" value="ECO:0007669"/>
    <property type="project" value="UniProtKB-KW"/>
</dbReference>
<dbReference type="GO" id="GO:0003735">
    <property type="term" value="F:structural constituent of ribosome"/>
    <property type="evidence" value="ECO:0007669"/>
    <property type="project" value="InterPro"/>
</dbReference>
<dbReference type="GO" id="GO:0006412">
    <property type="term" value="P:translation"/>
    <property type="evidence" value="ECO:0007669"/>
    <property type="project" value="UniProtKB-UniRule"/>
</dbReference>
<dbReference type="HAMAP" id="MF_00251">
    <property type="entry name" value="Ribosomal_bL36"/>
    <property type="match status" value="1"/>
</dbReference>
<dbReference type="InterPro" id="IPR000473">
    <property type="entry name" value="Ribosomal_bL36"/>
</dbReference>
<dbReference type="InterPro" id="IPR035977">
    <property type="entry name" value="Ribosomal_bL36_sp"/>
</dbReference>
<dbReference type="NCBIfam" id="TIGR01022">
    <property type="entry name" value="rpmJ_bact"/>
    <property type="match status" value="1"/>
</dbReference>
<dbReference type="PANTHER" id="PTHR42888">
    <property type="entry name" value="50S RIBOSOMAL PROTEIN L36, CHLOROPLASTIC"/>
    <property type="match status" value="1"/>
</dbReference>
<dbReference type="PANTHER" id="PTHR42888:SF1">
    <property type="entry name" value="LARGE RIBOSOMAL SUBUNIT PROTEIN BL36C"/>
    <property type="match status" value="1"/>
</dbReference>
<dbReference type="Pfam" id="PF00444">
    <property type="entry name" value="Ribosomal_L36"/>
    <property type="match status" value="1"/>
</dbReference>
<dbReference type="SUPFAM" id="SSF57840">
    <property type="entry name" value="Ribosomal protein L36"/>
    <property type="match status" value="1"/>
</dbReference>
<dbReference type="PROSITE" id="PS00828">
    <property type="entry name" value="RIBOSOMAL_L36"/>
    <property type="match status" value="1"/>
</dbReference>
<evidence type="ECO:0000269" key="1">
    <source>
    </source>
</evidence>
<evidence type="ECO:0000305" key="2"/>
<evidence type="ECO:0007829" key="3">
    <source>
        <dbReference type="PDB" id="1DFE"/>
    </source>
</evidence>
<evidence type="ECO:0007829" key="4">
    <source>
        <dbReference type="PDB" id="1DGZ"/>
    </source>
</evidence>
<reference key="1">
    <citation type="journal article" date="2000" name="J. Mol. Biol.">
        <title>The solution structure of ribosomal protein L36 from Thermus thermophilus reveals a zinc-ribbon-like fold.</title>
        <authorList>
            <person name="Haerd T."/>
            <person name="Rak A."/>
            <person name="Allard P."/>
            <person name="Kloo L."/>
            <person name="Garber M.B."/>
        </authorList>
    </citation>
    <scope>COFACTOR</scope>
    <scope>STRUCTURE BY NMR</scope>
</reference>
<keyword id="KW-0002">3D-structure</keyword>
<keyword id="KW-0479">Metal-binding</keyword>
<keyword id="KW-0687">Ribonucleoprotein</keyword>
<keyword id="KW-0689">Ribosomal protein</keyword>
<keyword id="KW-0862">Zinc</keyword>
<protein>
    <recommendedName>
        <fullName evidence="2">Large ribosomal subunit protein bL36</fullName>
    </recommendedName>
    <alternativeName>
        <fullName>50S ribosomal protein L36</fullName>
    </alternativeName>
    <alternativeName>
        <fullName>Ribosomal protein B</fullName>
    </alternativeName>
</protein>